<keyword id="KW-0687">Ribonucleoprotein</keyword>
<keyword id="KW-0689">Ribosomal protein</keyword>
<keyword id="KW-0694">RNA-binding</keyword>
<keyword id="KW-0699">rRNA-binding</keyword>
<reference key="1">
    <citation type="journal article" date="2008" name="Genomics">
        <title>Evolution in the laboratory: the genome of Halobacterium salinarum strain R1 compared to that of strain NRC-1.</title>
        <authorList>
            <person name="Pfeiffer F."/>
            <person name="Schuster S.C."/>
            <person name="Broicher A."/>
            <person name="Falb M."/>
            <person name="Palm P."/>
            <person name="Rodewald K."/>
            <person name="Ruepp A."/>
            <person name="Soppa J."/>
            <person name="Tittor J."/>
            <person name="Oesterhelt D."/>
        </authorList>
    </citation>
    <scope>NUCLEOTIDE SEQUENCE [LARGE SCALE GENOMIC DNA]</scope>
    <source>
        <strain>ATCC 29341 / DSM 671 / R1</strain>
    </source>
</reference>
<accession>B0R657</accession>
<evidence type="ECO:0000255" key="1">
    <source>
        <dbReference type="HAMAP-Rule" id="MF_01328"/>
    </source>
</evidence>
<evidence type="ECO:0000256" key="2">
    <source>
        <dbReference type="SAM" id="MobiDB-lite"/>
    </source>
</evidence>
<evidence type="ECO:0000305" key="3"/>
<dbReference type="EMBL" id="AM774415">
    <property type="protein sequence ID" value="CAP14226.1"/>
    <property type="molecule type" value="Genomic_DNA"/>
</dbReference>
<dbReference type="SMR" id="B0R657"/>
<dbReference type="EnsemblBacteria" id="CAP14226">
    <property type="protein sequence ID" value="CAP14226"/>
    <property type="gene ID" value="OE_3389F"/>
</dbReference>
<dbReference type="KEGG" id="hsl:OE_3389F"/>
<dbReference type="HOGENOM" id="CLU_026535_0_0_2"/>
<dbReference type="PhylomeDB" id="B0R657"/>
<dbReference type="Proteomes" id="UP000001321">
    <property type="component" value="Chromosome"/>
</dbReference>
<dbReference type="GO" id="GO:1990904">
    <property type="term" value="C:ribonucleoprotein complex"/>
    <property type="evidence" value="ECO:0007669"/>
    <property type="project" value="UniProtKB-KW"/>
</dbReference>
<dbReference type="GO" id="GO:0005840">
    <property type="term" value="C:ribosome"/>
    <property type="evidence" value="ECO:0007669"/>
    <property type="project" value="UniProtKB-KW"/>
</dbReference>
<dbReference type="GO" id="GO:0019843">
    <property type="term" value="F:rRNA binding"/>
    <property type="evidence" value="ECO:0007669"/>
    <property type="project" value="UniProtKB-UniRule"/>
</dbReference>
<dbReference type="GO" id="GO:0003735">
    <property type="term" value="F:structural constituent of ribosome"/>
    <property type="evidence" value="ECO:0007669"/>
    <property type="project" value="InterPro"/>
</dbReference>
<dbReference type="GO" id="GO:0006412">
    <property type="term" value="P:translation"/>
    <property type="evidence" value="ECO:0007669"/>
    <property type="project" value="UniProtKB-UniRule"/>
</dbReference>
<dbReference type="FunFam" id="3.40.1370.10:FF:000011">
    <property type="entry name" value="50S ribosomal protein L4"/>
    <property type="match status" value="1"/>
</dbReference>
<dbReference type="Gene3D" id="3.40.1370.10">
    <property type="match status" value="1"/>
</dbReference>
<dbReference type="HAMAP" id="MF_01328_A">
    <property type="entry name" value="Ribosomal_uL4_A"/>
    <property type="match status" value="1"/>
</dbReference>
<dbReference type="InterPro" id="IPR002136">
    <property type="entry name" value="Ribosomal_uL4"/>
</dbReference>
<dbReference type="InterPro" id="IPR023574">
    <property type="entry name" value="Ribosomal_uL4_dom_sf"/>
</dbReference>
<dbReference type="InterPro" id="IPR013000">
    <property type="entry name" value="Ribosomal_uL4_euk/arc_CS"/>
</dbReference>
<dbReference type="InterPro" id="IPR045240">
    <property type="entry name" value="Ribosomal_uL4_euk/arch"/>
</dbReference>
<dbReference type="InterPro" id="IPR019970">
    <property type="entry name" value="Ribosomall_uL4-arc"/>
</dbReference>
<dbReference type="NCBIfam" id="TIGR03672">
    <property type="entry name" value="rpl4p_arch"/>
    <property type="match status" value="1"/>
</dbReference>
<dbReference type="PANTHER" id="PTHR19431">
    <property type="entry name" value="60S RIBOSOMAL PROTEIN L4"/>
    <property type="match status" value="1"/>
</dbReference>
<dbReference type="Pfam" id="PF00573">
    <property type="entry name" value="Ribosomal_L4"/>
    <property type="match status" value="1"/>
</dbReference>
<dbReference type="SUPFAM" id="SSF52166">
    <property type="entry name" value="Ribosomal protein L4"/>
    <property type="match status" value="1"/>
</dbReference>
<dbReference type="PROSITE" id="PS00939">
    <property type="entry name" value="RIBOSOMAL_L1E"/>
    <property type="match status" value="1"/>
</dbReference>
<comment type="function">
    <text evidence="1">One of the primary rRNA binding proteins, this protein initially binds near the 5'-end of the 23S rRNA. It is important during the early stages of 50S assembly. It makes multiple contacts with different domains of the 23S rRNA in the assembled 50S subunit and ribosome.</text>
</comment>
<comment type="function">
    <text evidence="1">Forms part of the polypeptide exit tunnel.</text>
</comment>
<comment type="subunit">
    <text evidence="1">Part of the 50S ribosomal subunit.</text>
</comment>
<comment type="similarity">
    <text evidence="1">Belongs to the universal ribosomal protein uL4 family.</text>
</comment>
<name>RL4_HALS3</name>
<sequence length="250" mass="26658">MQVTVRDLDGDDAGTLDLPRVFEEPVRPDLVKRAVLAAQANRTQEYGADEYAGLRTTAESQGSGRGMAHVPKANGQGARVPQTVGGRKAHPPKAEKDHGLDVNDKERKAAVRAAVAATTDSELVADRGHNFDDDVEFPLVVSDDFEDLVKTQDVVSLLEALGVHADIERADEGRTVRAGQGTLRGRKYQEPTSILFVTASESGPSTAARNLAGVDVATGREVNAEDLAPGAEPGRLTVWTESAVEEVAQR</sequence>
<feature type="chain" id="PRO_1000142132" description="Large ribosomal subunit protein uL4">
    <location>
        <begin position="1"/>
        <end position="250"/>
    </location>
</feature>
<feature type="region of interest" description="Disordered" evidence="2">
    <location>
        <begin position="1"/>
        <end position="20"/>
    </location>
</feature>
<feature type="region of interest" description="Disordered" evidence="2">
    <location>
        <begin position="51"/>
        <end position="101"/>
    </location>
</feature>
<feature type="compositionally biased region" description="Basic and acidic residues" evidence="2">
    <location>
        <begin position="92"/>
        <end position="101"/>
    </location>
</feature>
<organism>
    <name type="scientific">Halobacterium salinarum (strain ATCC 29341 / DSM 671 / R1)</name>
    <dbReference type="NCBI Taxonomy" id="478009"/>
    <lineage>
        <taxon>Archaea</taxon>
        <taxon>Methanobacteriati</taxon>
        <taxon>Methanobacteriota</taxon>
        <taxon>Stenosarchaea group</taxon>
        <taxon>Halobacteria</taxon>
        <taxon>Halobacteriales</taxon>
        <taxon>Halobacteriaceae</taxon>
        <taxon>Halobacterium</taxon>
        <taxon>Halobacterium salinarum NRC-34001</taxon>
    </lineage>
</organism>
<gene>
    <name evidence="1" type="primary">rpl4</name>
    <name type="ordered locus">OE_3389F</name>
</gene>
<protein>
    <recommendedName>
        <fullName evidence="1">Large ribosomal subunit protein uL4</fullName>
    </recommendedName>
    <alternativeName>
        <fullName evidence="3">50S ribosomal protein L4</fullName>
    </alternativeName>
</protein>
<proteinExistence type="inferred from homology"/>